<sequence>MSKDSKMRATINQKLTEMGERERLKELLRAKLTECGWRDQLKAHCKDVIKEKGLEHVTVEDLVVEITPKGRVLVPDSVKKELLQRIRAFLAQHAT</sequence>
<feature type="chain" id="PRO_0000367548" description="Transcription and mRNA export factor ENY2-2">
    <location>
        <begin position="1"/>
        <end position="95"/>
    </location>
</feature>
<dbReference type="EMBL" id="BT050142">
    <property type="protein sequence ID" value="ACI69943.1"/>
    <property type="molecule type" value="mRNA"/>
</dbReference>
<dbReference type="SMR" id="B5XGH3"/>
<dbReference type="STRING" id="8030.ENSSSAP00000020659"/>
<dbReference type="PaxDb" id="8030-ENSSSAP00000020659"/>
<dbReference type="Ensembl" id="ENSSSAT00020086202">
    <property type="protein sequence ID" value="ENSSSAP00020060134"/>
    <property type="gene ID" value="ENSSSAG00020042594"/>
</dbReference>
<dbReference type="Ensembl" id="ENSSSAT00070002133">
    <property type="protein sequence ID" value="ENSSSAP00070001976"/>
    <property type="gene ID" value="ENSSSAG00070001471"/>
</dbReference>
<dbReference type="Ensembl" id="ENSSSAT00075020161">
    <property type="protein sequence ID" value="ENSSSAP00075013759"/>
    <property type="gene ID" value="ENSSSAG00075009914"/>
</dbReference>
<dbReference type="GeneID" id="106605055"/>
<dbReference type="KEGG" id="sasa:106605055"/>
<dbReference type="OMA" id="CHNTIKE"/>
<dbReference type="OrthoDB" id="456095at7898"/>
<dbReference type="Proteomes" id="UP000087266">
    <property type="component" value="Chromosome ssa05"/>
</dbReference>
<dbReference type="Bgee" id="ENSSSAG00000010054">
    <property type="expression patterns" value="Expressed in fast muscle tissue and 25 other cell types or tissues"/>
</dbReference>
<dbReference type="GO" id="GO:0071819">
    <property type="term" value="C:DUBm complex"/>
    <property type="evidence" value="ECO:0007669"/>
    <property type="project" value="UniProtKB-UniRule"/>
</dbReference>
<dbReference type="GO" id="GO:0005643">
    <property type="term" value="C:nuclear pore"/>
    <property type="evidence" value="ECO:0007669"/>
    <property type="project" value="UniProtKB-UniRule"/>
</dbReference>
<dbReference type="GO" id="GO:0005654">
    <property type="term" value="C:nucleoplasm"/>
    <property type="evidence" value="ECO:0007669"/>
    <property type="project" value="UniProtKB-SubCell"/>
</dbReference>
<dbReference type="GO" id="GO:0000124">
    <property type="term" value="C:SAGA complex"/>
    <property type="evidence" value="ECO:0000250"/>
    <property type="project" value="UniProtKB"/>
</dbReference>
<dbReference type="GO" id="GO:0070390">
    <property type="term" value="C:transcription export complex 2"/>
    <property type="evidence" value="ECO:0007669"/>
    <property type="project" value="UniProtKB-UniRule"/>
</dbReference>
<dbReference type="GO" id="GO:0003713">
    <property type="term" value="F:transcription coactivator activity"/>
    <property type="evidence" value="ECO:0000250"/>
    <property type="project" value="UniProtKB"/>
</dbReference>
<dbReference type="GO" id="GO:0006325">
    <property type="term" value="P:chromatin organization"/>
    <property type="evidence" value="ECO:0007669"/>
    <property type="project" value="UniProtKB-KW"/>
</dbReference>
<dbReference type="GO" id="GO:0006406">
    <property type="term" value="P:mRNA export from nucleus"/>
    <property type="evidence" value="ECO:0007669"/>
    <property type="project" value="UniProtKB-UniRule"/>
</dbReference>
<dbReference type="GO" id="GO:0045893">
    <property type="term" value="P:positive regulation of DNA-templated transcription"/>
    <property type="evidence" value="ECO:0000250"/>
    <property type="project" value="UniProtKB"/>
</dbReference>
<dbReference type="GO" id="GO:0015031">
    <property type="term" value="P:protein transport"/>
    <property type="evidence" value="ECO:0007669"/>
    <property type="project" value="UniProtKB-KW"/>
</dbReference>
<dbReference type="GO" id="GO:0006368">
    <property type="term" value="P:transcription elongation by RNA polymerase II"/>
    <property type="evidence" value="ECO:0007669"/>
    <property type="project" value="UniProtKB-UniRule"/>
</dbReference>
<dbReference type="FunFam" id="1.10.246.140:FF:000001">
    <property type="entry name" value="Transcription and mRNA export factor ENY2"/>
    <property type="match status" value="1"/>
</dbReference>
<dbReference type="Gene3D" id="1.10.246.140">
    <property type="match status" value="1"/>
</dbReference>
<dbReference type="HAMAP" id="MF_03046">
    <property type="entry name" value="ENY2_Sus1"/>
    <property type="match status" value="1"/>
</dbReference>
<dbReference type="InterPro" id="IPR018783">
    <property type="entry name" value="TF_ENY2"/>
</dbReference>
<dbReference type="InterPro" id="IPR038212">
    <property type="entry name" value="TF_EnY2_sf"/>
</dbReference>
<dbReference type="PANTHER" id="PTHR12514">
    <property type="entry name" value="ENHANCER OF YELLOW 2 TRANSCRIPTION FACTOR"/>
    <property type="match status" value="1"/>
</dbReference>
<dbReference type="Pfam" id="PF10163">
    <property type="entry name" value="EnY2"/>
    <property type="match status" value="1"/>
</dbReference>
<evidence type="ECO:0000250" key="1"/>
<evidence type="ECO:0000255" key="2">
    <source>
        <dbReference type="HAMAP-Rule" id="MF_03046"/>
    </source>
</evidence>
<organism>
    <name type="scientific">Salmo salar</name>
    <name type="common">Atlantic salmon</name>
    <dbReference type="NCBI Taxonomy" id="8030"/>
    <lineage>
        <taxon>Eukaryota</taxon>
        <taxon>Metazoa</taxon>
        <taxon>Chordata</taxon>
        <taxon>Craniata</taxon>
        <taxon>Vertebrata</taxon>
        <taxon>Euteleostomi</taxon>
        <taxon>Actinopterygii</taxon>
        <taxon>Neopterygii</taxon>
        <taxon>Teleostei</taxon>
        <taxon>Protacanthopterygii</taxon>
        <taxon>Salmoniformes</taxon>
        <taxon>Salmonidae</taxon>
        <taxon>Salmoninae</taxon>
        <taxon>Salmo</taxon>
    </lineage>
</organism>
<proteinExistence type="inferred from homology"/>
<reference key="1">
    <citation type="journal article" date="2010" name="BMC Genomics">
        <title>Salmo salar and Esox lucius full-length cDNA sequences reveal changes in evolutionary pressures on a post-tetraploidization genome.</title>
        <authorList>
            <person name="Leong J.S."/>
            <person name="Jantzen S.G."/>
            <person name="von Schalburg K.R."/>
            <person name="Cooper G.A."/>
            <person name="Messmer A.M."/>
            <person name="Liao N.Y."/>
            <person name="Munro S."/>
            <person name="Moore R."/>
            <person name="Holt R.A."/>
            <person name="Jones S.J."/>
            <person name="Davidson W.S."/>
            <person name="Koop B.F."/>
        </authorList>
    </citation>
    <scope>NUCLEOTIDE SEQUENCE [LARGE SCALE MRNA]</scope>
    <source>
        <tissue>Brain</tissue>
    </source>
</reference>
<comment type="function">
    <text evidence="1">Involved in mRNA export coupled transcription activation by association with both the TREX-2 and the SAGA complexes. The transcription regulatory histone acetylation (HAT) complex SAGA is a multiprotein complex that activates transcription by remodeling chromatin and mediating histone acetylation and deubiquitination. Within the SAGA complex, participates in a subcomplex that specifically deubiquitinates histones. The SAGA complex is recruited to specific gene promoters by activators, where it is required for transcription. The TREX-2 complex functions in docking export-competent ribonucleoprotein particles (mRNPs) to the nuclear entrance of the nuclear pore complex (nuclear basket). TREX-2 participates in mRNA export and accurate chromatin positioning in the nucleus by tethering genes to the nuclear periphery (By similarity).</text>
</comment>
<comment type="subunit">
    <text evidence="1">Component of the nuclear pore complex (NPC)-associated TREX-2 complex (transcription and export complex 2). Component of the SAGA transcription coactivator-HAT complex. Within the SAGA complex, participates in a subcomplex of SAGA called the DUB module (deubiquitination module) (By similarity).</text>
</comment>
<comment type="subcellular location">
    <subcellularLocation>
        <location evidence="2">Nucleus</location>
        <location evidence="2">Nucleoplasm</location>
    </subcellularLocation>
</comment>
<comment type="similarity">
    <text evidence="2">Belongs to the ENY2 family.</text>
</comment>
<name>ENY2B_SALSA</name>
<keyword id="KW-0010">Activator</keyword>
<keyword id="KW-0156">Chromatin regulator</keyword>
<keyword id="KW-0509">mRNA transport</keyword>
<keyword id="KW-0539">Nucleus</keyword>
<keyword id="KW-0653">Protein transport</keyword>
<keyword id="KW-1185">Reference proteome</keyword>
<keyword id="KW-0804">Transcription</keyword>
<keyword id="KW-0805">Transcription regulation</keyword>
<keyword id="KW-0811">Translocation</keyword>
<keyword id="KW-0813">Transport</keyword>
<protein>
    <recommendedName>
        <fullName evidence="2">Transcription and mRNA export factor ENY2-2</fullName>
    </recommendedName>
    <alternativeName>
        <fullName evidence="2">Enhancer of yellow 2 transcription factor homolog B</fullName>
    </alternativeName>
</protein>
<gene>
    <name type="primary">eny2-2</name>
</gene>
<accession>B5XGH3</accession>